<name>GLGA_ECO8A</name>
<gene>
    <name evidence="1" type="primary">glgA</name>
    <name type="ordered locus">ECIAI1_3575</name>
</gene>
<comment type="function">
    <text evidence="1">Synthesizes alpha-1,4-glucan chains using ADP-glucose.</text>
</comment>
<comment type="catalytic activity">
    <reaction evidence="1">
        <text>[(1-&gt;4)-alpha-D-glucosyl](n) + ADP-alpha-D-glucose = [(1-&gt;4)-alpha-D-glucosyl](n+1) + ADP + H(+)</text>
        <dbReference type="Rhea" id="RHEA:18189"/>
        <dbReference type="Rhea" id="RHEA-COMP:9584"/>
        <dbReference type="Rhea" id="RHEA-COMP:9587"/>
        <dbReference type="ChEBI" id="CHEBI:15378"/>
        <dbReference type="ChEBI" id="CHEBI:15444"/>
        <dbReference type="ChEBI" id="CHEBI:57498"/>
        <dbReference type="ChEBI" id="CHEBI:456216"/>
        <dbReference type="EC" id="2.4.1.21"/>
    </reaction>
</comment>
<comment type="pathway">
    <text evidence="1">Glycan biosynthesis; glycogen biosynthesis.</text>
</comment>
<comment type="similarity">
    <text evidence="1">Belongs to the glycosyltransferase 1 family. Bacterial/plant glycogen synthase subfamily.</text>
</comment>
<proteinExistence type="inferred from homology"/>
<feature type="chain" id="PRO_1000126068" description="Glycogen synthase">
    <location>
        <begin position="1"/>
        <end position="477"/>
    </location>
</feature>
<feature type="binding site" evidence="1">
    <location>
        <position position="15"/>
    </location>
    <ligand>
        <name>ADP-alpha-D-glucose</name>
        <dbReference type="ChEBI" id="CHEBI:57498"/>
    </ligand>
</feature>
<reference key="1">
    <citation type="journal article" date="2009" name="PLoS Genet.">
        <title>Organised genome dynamics in the Escherichia coli species results in highly diverse adaptive paths.</title>
        <authorList>
            <person name="Touchon M."/>
            <person name="Hoede C."/>
            <person name="Tenaillon O."/>
            <person name="Barbe V."/>
            <person name="Baeriswyl S."/>
            <person name="Bidet P."/>
            <person name="Bingen E."/>
            <person name="Bonacorsi S."/>
            <person name="Bouchier C."/>
            <person name="Bouvet O."/>
            <person name="Calteau A."/>
            <person name="Chiapello H."/>
            <person name="Clermont O."/>
            <person name="Cruveiller S."/>
            <person name="Danchin A."/>
            <person name="Diard M."/>
            <person name="Dossat C."/>
            <person name="Karoui M.E."/>
            <person name="Frapy E."/>
            <person name="Garry L."/>
            <person name="Ghigo J.M."/>
            <person name="Gilles A.M."/>
            <person name="Johnson J."/>
            <person name="Le Bouguenec C."/>
            <person name="Lescat M."/>
            <person name="Mangenot S."/>
            <person name="Martinez-Jehanne V."/>
            <person name="Matic I."/>
            <person name="Nassif X."/>
            <person name="Oztas S."/>
            <person name="Petit M.A."/>
            <person name="Pichon C."/>
            <person name="Rouy Z."/>
            <person name="Ruf C.S."/>
            <person name="Schneider D."/>
            <person name="Tourret J."/>
            <person name="Vacherie B."/>
            <person name="Vallenet D."/>
            <person name="Medigue C."/>
            <person name="Rocha E.P.C."/>
            <person name="Denamur E."/>
        </authorList>
    </citation>
    <scope>NUCLEOTIDE SEQUENCE [LARGE SCALE GENOMIC DNA]</scope>
    <source>
        <strain>IAI1</strain>
    </source>
</reference>
<accession>B7M2J2</accession>
<protein>
    <recommendedName>
        <fullName evidence="1">Glycogen synthase</fullName>
        <ecNumber evidence="1">2.4.1.21</ecNumber>
    </recommendedName>
    <alternativeName>
        <fullName evidence="1">Starch [bacterial glycogen] synthase</fullName>
    </alternativeName>
</protein>
<dbReference type="EC" id="2.4.1.21" evidence="1"/>
<dbReference type="EMBL" id="CU928160">
    <property type="protein sequence ID" value="CAR00374.1"/>
    <property type="molecule type" value="Genomic_DNA"/>
</dbReference>
<dbReference type="RefSeq" id="WP_001197646.1">
    <property type="nucleotide sequence ID" value="NC_011741.1"/>
</dbReference>
<dbReference type="SMR" id="B7M2J2"/>
<dbReference type="CAZy" id="GT5">
    <property type="family name" value="Glycosyltransferase Family 5"/>
</dbReference>
<dbReference type="GeneID" id="75202274"/>
<dbReference type="KEGG" id="ecr:ECIAI1_3575"/>
<dbReference type="HOGENOM" id="CLU_009583_18_2_6"/>
<dbReference type="UniPathway" id="UPA00164"/>
<dbReference type="GO" id="GO:0005829">
    <property type="term" value="C:cytosol"/>
    <property type="evidence" value="ECO:0007669"/>
    <property type="project" value="TreeGrafter"/>
</dbReference>
<dbReference type="GO" id="GO:0009011">
    <property type="term" value="F:alpha-1,4-glucan glucosyltransferase (ADP-glucose donor) activity"/>
    <property type="evidence" value="ECO:0007669"/>
    <property type="project" value="UniProtKB-UniRule"/>
</dbReference>
<dbReference type="GO" id="GO:0004373">
    <property type="term" value="F:alpha-1,4-glucan glucosyltransferase (UDP-glucose donor) activity"/>
    <property type="evidence" value="ECO:0007669"/>
    <property type="project" value="InterPro"/>
</dbReference>
<dbReference type="GO" id="GO:0005978">
    <property type="term" value="P:glycogen biosynthetic process"/>
    <property type="evidence" value="ECO:0007669"/>
    <property type="project" value="UniProtKB-UniRule"/>
</dbReference>
<dbReference type="CDD" id="cd03791">
    <property type="entry name" value="GT5_Glycogen_synthase_DULL1-like"/>
    <property type="match status" value="1"/>
</dbReference>
<dbReference type="FunFam" id="3.40.50.2000:FF:000008">
    <property type="entry name" value="Glycogen synthase"/>
    <property type="match status" value="1"/>
</dbReference>
<dbReference type="FunFam" id="3.40.50.2000:FF:000011">
    <property type="entry name" value="Glycogen synthase"/>
    <property type="match status" value="1"/>
</dbReference>
<dbReference type="Gene3D" id="3.40.50.2000">
    <property type="entry name" value="Glycogen Phosphorylase B"/>
    <property type="match status" value="2"/>
</dbReference>
<dbReference type="HAMAP" id="MF_00484">
    <property type="entry name" value="Glycogen_synth"/>
    <property type="match status" value="1"/>
</dbReference>
<dbReference type="InterPro" id="IPR001296">
    <property type="entry name" value="Glyco_trans_1"/>
</dbReference>
<dbReference type="InterPro" id="IPR011835">
    <property type="entry name" value="GS/SS"/>
</dbReference>
<dbReference type="InterPro" id="IPR013534">
    <property type="entry name" value="Starch_synth_cat_dom"/>
</dbReference>
<dbReference type="NCBIfam" id="TIGR02095">
    <property type="entry name" value="glgA"/>
    <property type="match status" value="1"/>
</dbReference>
<dbReference type="NCBIfam" id="NF001899">
    <property type="entry name" value="PRK00654.1-2"/>
    <property type="match status" value="1"/>
</dbReference>
<dbReference type="PANTHER" id="PTHR45825:SF11">
    <property type="entry name" value="ALPHA AMYLASE DOMAIN-CONTAINING PROTEIN"/>
    <property type="match status" value="1"/>
</dbReference>
<dbReference type="PANTHER" id="PTHR45825">
    <property type="entry name" value="GRANULE-BOUND STARCH SYNTHASE 1, CHLOROPLASTIC/AMYLOPLASTIC"/>
    <property type="match status" value="1"/>
</dbReference>
<dbReference type="Pfam" id="PF08323">
    <property type="entry name" value="Glyco_transf_5"/>
    <property type="match status" value="1"/>
</dbReference>
<dbReference type="Pfam" id="PF00534">
    <property type="entry name" value="Glycos_transf_1"/>
    <property type="match status" value="1"/>
</dbReference>
<dbReference type="SUPFAM" id="SSF53756">
    <property type="entry name" value="UDP-Glycosyltransferase/glycogen phosphorylase"/>
    <property type="match status" value="1"/>
</dbReference>
<organism>
    <name type="scientific">Escherichia coli O8 (strain IAI1)</name>
    <dbReference type="NCBI Taxonomy" id="585034"/>
    <lineage>
        <taxon>Bacteria</taxon>
        <taxon>Pseudomonadati</taxon>
        <taxon>Pseudomonadota</taxon>
        <taxon>Gammaproteobacteria</taxon>
        <taxon>Enterobacterales</taxon>
        <taxon>Enterobacteriaceae</taxon>
        <taxon>Escherichia</taxon>
    </lineage>
</organism>
<sequence>MQVLHVCSEMFPLLKTGGLADVIGALPAAQIADGVDARVLLPAFPDIRRGVTDAQVVSRRDTFAGHITLLFGHYNGVGIYLIDAPHLYDRPGSPYHDTNLFAYTDNVLRFALLGWVGAEMASGLDPFWRPDVVHAHDWHAGLAPAYLAARGRPAKSVFTVHNLAYQGMFYAHHMNDIQLPWSFFNIHGLEFNGQISFLKAGLYYADHITAVSPTYAREITEPQFAYGMEGLLQQRHREGRLSGVLNGVDEKIWSPETDLLLASRYTRDTLEDKAENKRQLQIAMGLKVDDKVPLFAVVSRLTSQKGLDLVLEALPGLLEQGGQLALLGAGDPVLQEGFLAAAAEYPGQVGVQIGYHEAFSHRIMGGADVILVPSRFEPCGLTQLYGLKYGTLPLVRRTGGLADTVSDCSLENLADGVASGFVFEDSNAWSLLRAIRRAFVLWSRPSLWRFVQRQAMAMDFSWQVAAKSYRELYYRLK</sequence>
<keyword id="KW-0320">Glycogen biosynthesis</keyword>
<keyword id="KW-0328">Glycosyltransferase</keyword>
<keyword id="KW-0808">Transferase</keyword>
<evidence type="ECO:0000255" key="1">
    <source>
        <dbReference type="HAMAP-Rule" id="MF_00484"/>
    </source>
</evidence>